<dbReference type="EMBL" id="AB026654">
    <property type="protein sequence ID" value="BAB01798.1"/>
    <property type="molecule type" value="Genomic_DNA"/>
</dbReference>
<dbReference type="EMBL" id="CP002686">
    <property type="protein sequence ID" value="AEE76136.1"/>
    <property type="molecule type" value="Genomic_DNA"/>
</dbReference>
<dbReference type="EMBL" id="DQ446673">
    <property type="protein sequence ID" value="ABE65947.1"/>
    <property type="molecule type" value="mRNA"/>
</dbReference>
<dbReference type="EMBL" id="AY085522">
    <property type="protein sequence ID" value="AAM62746.1"/>
    <property type="molecule type" value="mRNA"/>
</dbReference>
<dbReference type="RefSeq" id="NP_566617.1">
    <property type="nucleotide sequence ID" value="NM_112758.2"/>
</dbReference>
<dbReference type="SMR" id="Q9LSA5"/>
<dbReference type="BioGRID" id="6736">
    <property type="interactions" value="6"/>
</dbReference>
<dbReference type="FunCoup" id="Q9LSA5">
    <property type="interactions" value="63"/>
</dbReference>
<dbReference type="PaxDb" id="3702-AT3G18720.1"/>
<dbReference type="EnsemblPlants" id="AT3G18720.1">
    <property type="protein sequence ID" value="AT3G18720.1"/>
    <property type="gene ID" value="AT3G18720"/>
</dbReference>
<dbReference type="GeneID" id="821403"/>
<dbReference type="Gramene" id="AT3G18720.1">
    <property type="protein sequence ID" value="AT3G18720.1"/>
    <property type="gene ID" value="AT3G18720"/>
</dbReference>
<dbReference type="KEGG" id="ath:AT3G18720"/>
<dbReference type="Araport" id="AT3G18720"/>
<dbReference type="TAIR" id="AT3G18720"/>
<dbReference type="eggNOG" id="ENOG502QWFR">
    <property type="taxonomic scope" value="Eukaryota"/>
</dbReference>
<dbReference type="HOGENOM" id="CLU_060427_0_0_1"/>
<dbReference type="InParanoid" id="Q9LSA5"/>
<dbReference type="OMA" id="IWSAFGQ"/>
<dbReference type="PhylomeDB" id="Q9LSA5"/>
<dbReference type="PRO" id="PR:Q9LSA5"/>
<dbReference type="Proteomes" id="UP000006548">
    <property type="component" value="Chromosome 3"/>
</dbReference>
<dbReference type="ExpressionAtlas" id="Q9LSA5">
    <property type="expression patterns" value="baseline and differential"/>
</dbReference>
<dbReference type="Gene3D" id="1.20.1280.50">
    <property type="match status" value="1"/>
</dbReference>
<dbReference type="InterPro" id="IPR036047">
    <property type="entry name" value="F-box-like_dom_sf"/>
</dbReference>
<dbReference type="InterPro" id="IPR001810">
    <property type="entry name" value="F-box_dom"/>
</dbReference>
<dbReference type="InterPro" id="IPR011043">
    <property type="entry name" value="Gal_Oxase/kelch_b-propeller"/>
</dbReference>
<dbReference type="InterPro" id="IPR005174">
    <property type="entry name" value="KIB1-4_b-propeller"/>
</dbReference>
<dbReference type="PANTHER" id="PTHR33127">
    <property type="entry name" value="TRANSMEMBRANE PROTEIN"/>
    <property type="match status" value="1"/>
</dbReference>
<dbReference type="PANTHER" id="PTHR33127:SF5">
    <property type="entry name" value="TRANSMEMBRANE PROTEIN"/>
    <property type="match status" value="1"/>
</dbReference>
<dbReference type="Pfam" id="PF03478">
    <property type="entry name" value="Beta-prop_KIB1-4"/>
    <property type="match status" value="1"/>
</dbReference>
<dbReference type="Pfam" id="PF00646">
    <property type="entry name" value="F-box"/>
    <property type="match status" value="1"/>
</dbReference>
<dbReference type="SUPFAM" id="SSF81383">
    <property type="entry name" value="F-box domain"/>
    <property type="match status" value="1"/>
</dbReference>
<dbReference type="SUPFAM" id="SSF50965">
    <property type="entry name" value="Galactose oxidase, central domain"/>
    <property type="match status" value="1"/>
</dbReference>
<organism>
    <name type="scientific">Arabidopsis thaliana</name>
    <name type="common">Mouse-ear cress</name>
    <dbReference type="NCBI Taxonomy" id="3702"/>
    <lineage>
        <taxon>Eukaryota</taxon>
        <taxon>Viridiplantae</taxon>
        <taxon>Streptophyta</taxon>
        <taxon>Embryophyta</taxon>
        <taxon>Tracheophyta</taxon>
        <taxon>Spermatophyta</taxon>
        <taxon>Magnoliopsida</taxon>
        <taxon>eudicotyledons</taxon>
        <taxon>Gunneridae</taxon>
        <taxon>Pentapetalae</taxon>
        <taxon>rosids</taxon>
        <taxon>malvids</taxon>
        <taxon>Brassicales</taxon>
        <taxon>Brassicaceae</taxon>
        <taxon>Camelineae</taxon>
        <taxon>Arabidopsis</taxon>
    </lineage>
</organism>
<gene>
    <name type="ordered locus">At3g18720</name>
    <name type="ORF">MVE11.8</name>
</gene>
<proteinExistence type="evidence at transcript level"/>
<reference key="1">
    <citation type="journal article" date="2000" name="DNA Res.">
        <title>Structural analysis of Arabidopsis thaliana chromosome 3. I. Sequence features of the regions of 4,504,864 bp covered by sixty P1 and TAC clones.</title>
        <authorList>
            <person name="Sato S."/>
            <person name="Nakamura Y."/>
            <person name="Kaneko T."/>
            <person name="Katoh T."/>
            <person name="Asamizu E."/>
            <person name="Tabata S."/>
        </authorList>
    </citation>
    <scope>NUCLEOTIDE SEQUENCE [LARGE SCALE GENOMIC DNA]</scope>
    <source>
        <strain>cv. Columbia</strain>
    </source>
</reference>
<reference key="2">
    <citation type="journal article" date="2017" name="Plant J.">
        <title>Araport11: a complete reannotation of the Arabidopsis thaliana reference genome.</title>
        <authorList>
            <person name="Cheng C.Y."/>
            <person name="Krishnakumar V."/>
            <person name="Chan A.P."/>
            <person name="Thibaud-Nissen F."/>
            <person name="Schobel S."/>
            <person name="Town C.D."/>
        </authorList>
    </citation>
    <scope>GENOME REANNOTATION</scope>
    <source>
        <strain>cv. Columbia</strain>
    </source>
</reference>
<reference key="3">
    <citation type="journal article" date="2006" name="Plant Biotechnol. J.">
        <title>Simultaneous high-throughput recombinational cloning of open reading frames in closed and open configurations.</title>
        <authorList>
            <person name="Underwood B.A."/>
            <person name="Vanderhaeghen R."/>
            <person name="Whitford R."/>
            <person name="Town C.D."/>
            <person name="Hilson P."/>
        </authorList>
    </citation>
    <scope>NUCLEOTIDE SEQUENCE [LARGE SCALE MRNA]</scope>
    <source>
        <strain>cv. Columbia</strain>
    </source>
</reference>
<reference key="4">
    <citation type="submission" date="2002-03" db="EMBL/GenBank/DDBJ databases">
        <title>Full-length cDNA from Arabidopsis thaliana.</title>
        <authorList>
            <person name="Brover V.V."/>
            <person name="Troukhan M.E."/>
            <person name="Alexandrov N.A."/>
            <person name="Lu Y.-P."/>
            <person name="Flavell R.B."/>
            <person name="Feldmann K.A."/>
        </authorList>
    </citation>
    <scope>NUCLEOTIDE SEQUENCE [LARGE SCALE MRNA]</scope>
</reference>
<accession>Q9LSA5</accession>
<accession>Q8LEB3</accession>
<protein>
    <recommendedName>
        <fullName>F-box/kelch-repeat protein At3g18720</fullName>
    </recommendedName>
</protein>
<name>FBK62_ARATH</name>
<keyword id="KW-0880">Kelch repeat</keyword>
<keyword id="KW-1185">Reference proteome</keyword>
<keyword id="KW-0677">Repeat</keyword>
<feature type="chain" id="PRO_0000283222" description="F-box/kelch-repeat protein At3g18720">
    <location>
        <begin position="1"/>
        <end position="380"/>
    </location>
</feature>
<feature type="domain" description="F-box">
    <location>
        <begin position="47"/>
        <end position="94"/>
    </location>
</feature>
<feature type="repeat" description="Kelch 1">
    <location>
        <begin position="190"/>
        <end position="233"/>
    </location>
</feature>
<feature type="repeat" description="Kelch 2">
    <location>
        <begin position="234"/>
        <end position="279"/>
    </location>
</feature>
<feature type="sequence conflict" description="In Ref. 4; AAM62746." evidence="1" ref="4">
    <original>R</original>
    <variation>C</variation>
    <location>
        <position position="63"/>
    </location>
</feature>
<feature type="sequence conflict" description="In Ref. 4; AAM62746." evidence="1" ref="4">
    <original>V</original>
    <variation>F</variation>
    <location>
        <position position="251"/>
    </location>
</feature>
<evidence type="ECO:0000305" key="1"/>
<sequence>MRTRRQTYPPIAESLTARSIVQALPASATISGNGGPKKKKNCVNRGLWDKQIPTDLLQEILSRLGLKANIHASLVCKTWLKEAVSVRKFQSRPWLFYPQSQRGGPKEGDYVLFNPSRSQTHHLKFPELTGYRNKLACAKDGWLLVVKDNPDVVFFLNPFTGERICLPQVPQNSTRDCLTFSAAPTSTSCCVISFTPQSFLYAVVKVDTWRPGESVWTTHHFDQKRYGEVINRCIFSNGMFYCLSTSGRLSVFDPSRETWNVLPVKPCRAFRRKIMLVRQVFMTEHEGDIFVVTTRRVNNRKLLAFKLNLQGNVWEEMKVPNGLTVFSSDATSLTRAGLPEEERNILYSSDIDDFVKSSHPTFYYYDCSAWLQPPHDNFNF</sequence>